<evidence type="ECO:0000255" key="1">
    <source>
        <dbReference type="HAMAP-Rule" id="MF_00360"/>
    </source>
</evidence>
<evidence type="ECO:0000305" key="2"/>
<protein>
    <recommendedName>
        <fullName evidence="1">Small ribosomal subunit protein bS6</fullName>
    </recommendedName>
    <alternativeName>
        <fullName evidence="2">30S ribosomal protein S6</fullName>
    </alternativeName>
</protein>
<keyword id="KW-1185">Reference proteome</keyword>
<keyword id="KW-0687">Ribonucleoprotein</keyword>
<keyword id="KW-0689">Ribosomal protein</keyword>
<keyword id="KW-0694">RNA-binding</keyword>
<keyword id="KW-0699">rRNA-binding</keyword>
<organism>
    <name type="scientific">Arthrobacter sp. (strain FB24)</name>
    <dbReference type="NCBI Taxonomy" id="290399"/>
    <lineage>
        <taxon>Bacteria</taxon>
        <taxon>Bacillati</taxon>
        <taxon>Actinomycetota</taxon>
        <taxon>Actinomycetes</taxon>
        <taxon>Micrococcales</taxon>
        <taxon>Micrococcaceae</taxon>
        <taxon>Arthrobacter</taxon>
    </lineage>
</organism>
<accession>A0K2H5</accession>
<reference key="1">
    <citation type="journal article" date="2013" name="Stand. Genomic Sci.">
        <title>Complete genome sequence of Arthrobacter sp. strain FB24.</title>
        <authorList>
            <person name="Nakatsu C.H."/>
            <person name="Barabote R."/>
            <person name="Thompson S."/>
            <person name="Bruce D."/>
            <person name="Detter C."/>
            <person name="Brettin T."/>
            <person name="Han C."/>
            <person name="Beasley F."/>
            <person name="Chen W."/>
            <person name="Konopka A."/>
            <person name="Xie G."/>
        </authorList>
    </citation>
    <scope>NUCLEOTIDE SEQUENCE [LARGE SCALE GENOMIC DNA]</scope>
    <source>
        <strain>FB24</strain>
    </source>
</reference>
<feature type="chain" id="PRO_1000005214" description="Small ribosomal subunit protein bS6">
    <location>
        <begin position="1"/>
        <end position="101"/>
    </location>
</feature>
<proteinExistence type="inferred from homology"/>
<gene>
    <name evidence="1" type="primary">rpsF</name>
    <name type="ordered locus">Arth_4120</name>
</gene>
<name>RS6_ARTS2</name>
<comment type="function">
    <text evidence="1">Binds together with bS18 to 16S ribosomal RNA.</text>
</comment>
<comment type="similarity">
    <text evidence="1">Belongs to the bacterial ribosomal protein bS6 family.</text>
</comment>
<sequence>MRPYELMVIIDPEVEERTVEPSLQKFLNVITNDGGTIEKVDIWGRRRLAYEIKKKSEGIYAVVNFTAKPDTAKELDRQLSLNETIMRTKITRPEEQKVVAE</sequence>
<dbReference type="EMBL" id="CP000454">
    <property type="protein sequence ID" value="ABK05495.1"/>
    <property type="molecule type" value="Genomic_DNA"/>
</dbReference>
<dbReference type="RefSeq" id="WP_011693941.1">
    <property type="nucleotide sequence ID" value="NC_008541.1"/>
</dbReference>
<dbReference type="SMR" id="A0K2H5"/>
<dbReference type="STRING" id="290399.Arth_4120"/>
<dbReference type="KEGG" id="art:Arth_4120"/>
<dbReference type="eggNOG" id="COG0360">
    <property type="taxonomic scope" value="Bacteria"/>
</dbReference>
<dbReference type="HOGENOM" id="CLU_113441_5_3_11"/>
<dbReference type="OrthoDB" id="9812702at2"/>
<dbReference type="Proteomes" id="UP000000754">
    <property type="component" value="Chromosome"/>
</dbReference>
<dbReference type="GO" id="GO:0005737">
    <property type="term" value="C:cytoplasm"/>
    <property type="evidence" value="ECO:0007669"/>
    <property type="project" value="UniProtKB-ARBA"/>
</dbReference>
<dbReference type="GO" id="GO:1990904">
    <property type="term" value="C:ribonucleoprotein complex"/>
    <property type="evidence" value="ECO:0007669"/>
    <property type="project" value="UniProtKB-KW"/>
</dbReference>
<dbReference type="GO" id="GO:0005840">
    <property type="term" value="C:ribosome"/>
    <property type="evidence" value="ECO:0007669"/>
    <property type="project" value="UniProtKB-KW"/>
</dbReference>
<dbReference type="GO" id="GO:0070181">
    <property type="term" value="F:small ribosomal subunit rRNA binding"/>
    <property type="evidence" value="ECO:0007669"/>
    <property type="project" value="TreeGrafter"/>
</dbReference>
<dbReference type="GO" id="GO:0003735">
    <property type="term" value="F:structural constituent of ribosome"/>
    <property type="evidence" value="ECO:0007669"/>
    <property type="project" value="InterPro"/>
</dbReference>
<dbReference type="GO" id="GO:0006412">
    <property type="term" value="P:translation"/>
    <property type="evidence" value="ECO:0007669"/>
    <property type="project" value="UniProtKB-UniRule"/>
</dbReference>
<dbReference type="CDD" id="cd00473">
    <property type="entry name" value="bS6"/>
    <property type="match status" value="1"/>
</dbReference>
<dbReference type="FunFam" id="3.30.70.60:FF:000002">
    <property type="entry name" value="30S ribosomal protein S6"/>
    <property type="match status" value="1"/>
</dbReference>
<dbReference type="Gene3D" id="3.30.70.60">
    <property type="match status" value="1"/>
</dbReference>
<dbReference type="HAMAP" id="MF_00360">
    <property type="entry name" value="Ribosomal_bS6"/>
    <property type="match status" value="1"/>
</dbReference>
<dbReference type="InterPro" id="IPR000529">
    <property type="entry name" value="Ribosomal_bS6"/>
</dbReference>
<dbReference type="InterPro" id="IPR020815">
    <property type="entry name" value="Ribosomal_bS6_CS"/>
</dbReference>
<dbReference type="InterPro" id="IPR035980">
    <property type="entry name" value="Ribosomal_bS6_sf"/>
</dbReference>
<dbReference type="InterPro" id="IPR020814">
    <property type="entry name" value="Ribosomal_S6_plastid/chlpt"/>
</dbReference>
<dbReference type="InterPro" id="IPR014717">
    <property type="entry name" value="Transl_elong_EF1B/ribsomal_bS6"/>
</dbReference>
<dbReference type="NCBIfam" id="TIGR00166">
    <property type="entry name" value="S6"/>
    <property type="match status" value="1"/>
</dbReference>
<dbReference type="PANTHER" id="PTHR21011">
    <property type="entry name" value="MITOCHONDRIAL 28S RIBOSOMAL PROTEIN S6"/>
    <property type="match status" value="1"/>
</dbReference>
<dbReference type="PANTHER" id="PTHR21011:SF1">
    <property type="entry name" value="SMALL RIBOSOMAL SUBUNIT PROTEIN BS6M"/>
    <property type="match status" value="1"/>
</dbReference>
<dbReference type="Pfam" id="PF01250">
    <property type="entry name" value="Ribosomal_S6"/>
    <property type="match status" value="1"/>
</dbReference>
<dbReference type="SUPFAM" id="SSF54995">
    <property type="entry name" value="Ribosomal protein S6"/>
    <property type="match status" value="1"/>
</dbReference>
<dbReference type="PROSITE" id="PS01048">
    <property type="entry name" value="RIBOSOMAL_S6"/>
    <property type="match status" value="1"/>
</dbReference>